<gene>
    <name evidence="1" type="primary">pdxA</name>
    <name type="ordered locus">Maqu_3508</name>
</gene>
<protein>
    <recommendedName>
        <fullName evidence="1">4-hydroxythreonine-4-phosphate dehydrogenase</fullName>
        <ecNumber evidence="1">1.1.1.262</ecNumber>
    </recommendedName>
    <alternativeName>
        <fullName evidence="1">4-(phosphohydroxy)-L-threonine dehydrogenase</fullName>
    </alternativeName>
</protein>
<comment type="function">
    <text evidence="1">Catalyzes the NAD(P)-dependent oxidation of 4-(phosphooxy)-L-threonine (HTP) into 2-amino-3-oxo-4-(phosphooxy)butyric acid which spontaneously decarboxylates to form 3-amino-2-oxopropyl phosphate (AHAP).</text>
</comment>
<comment type="catalytic activity">
    <reaction evidence="1">
        <text>4-(phosphooxy)-L-threonine + NAD(+) = 3-amino-2-oxopropyl phosphate + CO2 + NADH</text>
        <dbReference type="Rhea" id="RHEA:32275"/>
        <dbReference type="ChEBI" id="CHEBI:16526"/>
        <dbReference type="ChEBI" id="CHEBI:57279"/>
        <dbReference type="ChEBI" id="CHEBI:57540"/>
        <dbReference type="ChEBI" id="CHEBI:57945"/>
        <dbReference type="ChEBI" id="CHEBI:58452"/>
        <dbReference type="EC" id="1.1.1.262"/>
    </reaction>
</comment>
<comment type="cofactor">
    <cofactor evidence="1">
        <name>Zn(2+)</name>
        <dbReference type="ChEBI" id="CHEBI:29105"/>
    </cofactor>
    <cofactor evidence="1">
        <name>Mg(2+)</name>
        <dbReference type="ChEBI" id="CHEBI:18420"/>
    </cofactor>
    <cofactor evidence="1">
        <name>Co(2+)</name>
        <dbReference type="ChEBI" id="CHEBI:48828"/>
    </cofactor>
    <text evidence="1">Binds 1 divalent metal cation per subunit. Can use ions such as Zn(2+), Mg(2+) or Co(2+).</text>
</comment>
<comment type="pathway">
    <text evidence="1">Cofactor biosynthesis; pyridoxine 5'-phosphate biosynthesis; pyridoxine 5'-phosphate from D-erythrose 4-phosphate: step 4/5.</text>
</comment>
<comment type="subunit">
    <text evidence="1">Homodimer.</text>
</comment>
<comment type="subcellular location">
    <subcellularLocation>
        <location evidence="1">Cytoplasm</location>
    </subcellularLocation>
</comment>
<comment type="miscellaneous">
    <text evidence="1">The active site is located at the dimer interface.</text>
</comment>
<comment type="similarity">
    <text evidence="1">Belongs to the PdxA family.</text>
</comment>
<keyword id="KW-0170">Cobalt</keyword>
<keyword id="KW-0963">Cytoplasm</keyword>
<keyword id="KW-0460">Magnesium</keyword>
<keyword id="KW-0479">Metal-binding</keyword>
<keyword id="KW-0520">NAD</keyword>
<keyword id="KW-0521">NADP</keyword>
<keyword id="KW-0560">Oxidoreductase</keyword>
<keyword id="KW-0664">Pyridoxine biosynthesis</keyword>
<keyword id="KW-0862">Zinc</keyword>
<reference key="1">
    <citation type="journal article" date="2011" name="Appl. Environ. Microbiol.">
        <title>Genomic potential of Marinobacter aquaeolei, a biogeochemical 'opportunitroph'.</title>
        <authorList>
            <person name="Singer E."/>
            <person name="Webb E.A."/>
            <person name="Nelson W.C."/>
            <person name="Heidelberg J.F."/>
            <person name="Ivanova N."/>
            <person name="Pati A."/>
            <person name="Edwards K.J."/>
        </authorList>
    </citation>
    <scope>NUCLEOTIDE SEQUENCE [LARGE SCALE GENOMIC DNA]</scope>
    <source>
        <strain>ATCC 700491 / DSM 11845 / VT8</strain>
    </source>
</reference>
<dbReference type="EC" id="1.1.1.262" evidence="1"/>
<dbReference type="EMBL" id="CP000514">
    <property type="protein sequence ID" value="ABM20578.1"/>
    <property type="molecule type" value="Genomic_DNA"/>
</dbReference>
<dbReference type="RefSeq" id="WP_011786919.1">
    <property type="nucleotide sequence ID" value="NC_008740.1"/>
</dbReference>
<dbReference type="SMR" id="A1U6F9"/>
<dbReference type="STRING" id="351348.Maqu_3508"/>
<dbReference type="KEGG" id="maq:Maqu_3508"/>
<dbReference type="eggNOG" id="COG1995">
    <property type="taxonomic scope" value="Bacteria"/>
</dbReference>
<dbReference type="HOGENOM" id="CLU_040168_2_0_6"/>
<dbReference type="OrthoDB" id="9801783at2"/>
<dbReference type="UniPathway" id="UPA00244">
    <property type="reaction ID" value="UER00312"/>
</dbReference>
<dbReference type="Proteomes" id="UP000000998">
    <property type="component" value="Chromosome"/>
</dbReference>
<dbReference type="GO" id="GO:0005737">
    <property type="term" value="C:cytoplasm"/>
    <property type="evidence" value="ECO:0007669"/>
    <property type="project" value="UniProtKB-SubCell"/>
</dbReference>
<dbReference type="GO" id="GO:0050570">
    <property type="term" value="F:4-hydroxythreonine-4-phosphate dehydrogenase activity"/>
    <property type="evidence" value="ECO:0007669"/>
    <property type="project" value="UniProtKB-UniRule"/>
</dbReference>
<dbReference type="GO" id="GO:0050897">
    <property type="term" value="F:cobalt ion binding"/>
    <property type="evidence" value="ECO:0007669"/>
    <property type="project" value="UniProtKB-UniRule"/>
</dbReference>
<dbReference type="GO" id="GO:0000287">
    <property type="term" value="F:magnesium ion binding"/>
    <property type="evidence" value="ECO:0007669"/>
    <property type="project" value="UniProtKB-UniRule"/>
</dbReference>
<dbReference type="GO" id="GO:0051287">
    <property type="term" value="F:NAD binding"/>
    <property type="evidence" value="ECO:0007669"/>
    <property type="project" value="InterPro"/>
</dbReference>
<dbReference type="GO" id="GO:0008270">
    <property type="term" value="F:zinc ion binding"/>
    <property type="evidence" value="ECO:0007669"/>
    <property type="project" value="UniProtKB-UniRule"/>
</dbReference>
<dbReference type="GO" id="GO:0042823">
    <property type="term" value="P:pyridoxal phosphate biosynthetic process"/>
    <property type="evidence" value="ECO:0007669"/>
    <property type="project" value="UniProtKB-UniRule"/>
</dbReference>
<dbReference type="GO" id="GO:0008615">
    <property type="term" value="P:pyridoxine biosynthetic process"/>
    <property type="evidence" value="ECO:0007669"/>
    <property type="project" value="UniProtKB-UniRule"/>
</dbReference>
<dbReference type="Gene3D" id="3.40.718.10">
    <property type="entry name" value="Isopropylmalate Dehydrogenase"/>
    <property type="match status" value="1"/>
</dbReference>
<dbReference type="HAMAP" id="MF_00536">
    <property type="entry name" value="PdxA"/>
    <property type="match status" value="1"/>
</dbReference>
<dbReference type="InterPro" id="IPR037510">
    <property type="entry name" value="PdxA"/>
</dbReference>
<dbReference type="InterPro" id="IPR005255">
    <property type="entry name" value="PdxA_fam"/>
</dbReference>
<dbReference type="NCBIfam" id="TIGR00557">
    <property type="entry name" value="pdxA"/>
    <property type="match status" value="1"/>
</dbReference>
<dbReference type="PANTHER" id="PTHR30004">
    <property type="entry name" value="4-HYDROXYTHREONINE-4-PHOSPHATE DEHYDROGENASE"/>
    <property type="match status" value="1"/>
</dbReference>
<dbReference type="PANTHER" id="PTHR30004:SF5">
    <property type="entry name" value="4-HYDROXYTHREONINE-4-PHOSPHATE DEHYDROGENASE"/>
    <property type="match status" value="1"/>
</dbReference>
<dbReference type="Pfam" id="PF04166">
    <property type="entry name" value="PdxA"/>
    <property type="match status" value="1"/>
</dbReference>
<dbReference type="SUPFAM" id="SSF53659">
    <property type="entry name" value="Isocitrate/Isopropylmalate dehydrogenase-like"/>
    <property type="match status" value="1"/>
</dbReference>
<accession>A1U6F9</accession>
<organism>
    <name type="scientific">Marinobacter nauticus (strain ATCC 700491 / DSM 11845 / VT8)</name>
    <name type="common">Marinobacter aquaeolei</name>
    <dbReference type="NCBI Taxonomy" id="351348"/>
    <lineage>
        <taxon>Bacteria</taxon>
        <taxon>Pseudomonadati</taxon>
        <taxon>Pseudomonadota</taxon>
        <taxon>Gammaproteobacteria</taxon>
        <taxon>Pseudomonadales</taxon>
        <taxon>Marinobacteraceae</taxon>
        <taxon>Marinobacter</taxon>
    </lineage>
</organism>
<name>PDXA_MARN8</name>
<sequence>MSTPVILALTAGEPAGIGPELCLQLATGSRDAGLVVIASGELLRDRASQLGLQIELHDWQPGVAAATRAGHLSVRHVEGCGSTVAGRLDKANSQYVLDTLTIAARGCLNGDFDGMVTAPVHKGVINEAGIVFSGHTEFLQELCGVERVVMMLATEELRVALVTTHLPLKDVSAAITPDRLTQVTRILNADLKAFFGIDQPRILVAGLNPHAGEGGHLGREEIEVIEPTLEQLRAEGIQLTGPLPADTLFTPHWLDNADAVLAMYHDQGLPVLKFQGFGRAVNITLGLPIVRTSVDHGTALDLAGTGKADAGSLHTAIRVGEQMAQCRKATGAGELS</sequence>
<feature type="chain" id="PRO_1000051507" description="4-hydroxythreonine-4-phosphate dehydrogenase">
    <location>
        <begin position="1"/>
        <end position="336"/>
    </location>
</feature>
<feature type="binding site" evidence="1">
    <location>
        <position position="135"/>
    </location>
    <ligand>
        <name>substrate</name>
    </ligand>
</feature>
<feature type="binding site" evidence="1">
    <location>
        <position position="136"/>
    </location>
    <ligand>
        <name>substrate</name>
    </ligand>
</feature>
<feature type="binding site" evidence="1">
    <location>
        <position position="165"/>
    </location>
    <ligand>
        <name>a divalent metal cation</name>
        <dbReference type="ChEBI" id="CHEBI:60240"/>
        <note>ligand shared between dimeric partners</note>
    </ligand>
</feature>
<feature type="binding site" evidence="1">
    <location>
        <position position="210"/>
    </location>
    <ligand>
        <name>a divalent metal cation</name>
        <dbReference type="ChEBI" id="CHEBI:60240"/>
        <note>ligand shared between dimeric partners</note>
    </ligand>
</feature>
<feature type="binding site" evidence="1">
    <location>
        <position position="265"/>
    </location>
    <ligand>
        <name>a divalent metal cation</name>
        <dbReference type="ChEBI" id="CHEBI:60240"/>
        <note>ligand shared between dimeric partners</note>
    </ligand>
</feature>
<feature type="binding site" evidence="1">
    <location>
        <position position="273"/>
    </location>
    <ligand>
        <name>substrate</name>
    </ligand>
</feature>
<feature type="binding site" evidence="1">
    <location>
        <position position="282"/>
    </location>
    <ligand>
        <name>substrate</name>
    </ligand>
</feature>
<feature type="binding site" evidence="1">
    <location>
        <position position="291"/>
    </location>
    <ligand>
        <name>substrate</name>
    </ligand>
</feature>
<evidence type="ECO:0000255" key="1">
    <source>
        <dbReference type="HAMAP-Rule" id="MF_00536"/>
    </source>
</evidence>
<proteinExistence type="inferred from homology"/>